<feature type="chain" id="PRO_1000072046" description="ATP-dependent dethiobiotin synthetase BioD">
    <location>
        <begin position="1"/>
        <end position="201"/>
    </location>
</feature>
<feature type="active site" evidence="1">
    <location>
        <position position="31"/>
    </location>
</feature>
<feature type="binding site" evidence="1">
    <location>
        <begin position="11"/>
        <end position="16"/>
    </location>
    <ligand>
        <name>ATP</name>
        <dbReference type="ChEBI" id="CHEBI:30616"/>
    </ligand>
</feature>
<feature type="binding site" evidence="1">
    <location>
        <position position="15"/>
    </location>
    <ligand>
        <name>Mg(2+)</name>
        <dbReference type="ChEBI" id="CHEBI:18420"/>
    </ligand>
</feature>
<feature type="binding site" evidence="1">
    <location>
        <position position="40"/>
    </location>
    <ligand>
        <name>ATP</name>
        <dbReference type="ChEBI" id="CHEBI:30616"/>
    </ligand>
</feature>
<feature type="binding site" evidence="1">
    <location>
        <position position="40"/>
    </location>
    <ligand>
        <name>Mg(2+)</name>
        <dbReference type="ChEBI" id="CHEBI:18420"/>
    </ligand>
</feature>
<feature type="binding site" evidence="1">
    <location>
        <begin position="93"/>
        <end position="96"/>
    </location>
    <ligand>
        <name>ATP</name>
        <dbReference type="ChEBI" id="CHEBI:30616"/>
    </ligand>
</feature>
<feature type="binding site" evidence="1">
    <location>
        <position position="93"/>
    </location>
    <ligand>
        <name>Mg(2+)</name>
        <dbReference type="ChEBI" id="CHEBI:18420"/>
    </ligand>
</feature>
<reference key="1">
    <citation type="journal article" date="2007" name="J. Bacteriol.">
        <title>The complete genome sequence of Campylobacter jejuni strain 81116 (NCTC11828).</title>
        <authorList>
            <person name="Pearson B.M."/>
            <person name="Gaskin D.J.H."/>
            <person name="Segers R.P.A.M."/>
            <person name="Wells J.M."/>
            <person name="Nuijten P.J.M."/>
            <person name="van Vliet A.H.M."/>
        </authorList>
    </citation>
    <scope>NUCLEOTIDE SEQUENCE [LARGE SCALE GENOMIC DNA]</scope>
    <source>
        <strain>81116 / NCTC 11828</strain>
    </source>
</reference>
<organism>
    <name type="scientific">Campylobacter jejuni subsp. jejuni serotype O:6 (strain 81116 / NCTC 11828)</name>
    <dbReference type="NCBI Taxonomy" id="407148"/>
    <lineage>
        <taxon>Bacteria</taxon>
        <taxon>Pseudomonadati</taxon>
        <taxon>Campylobacterota</taxon>
        <taxon>Epsilonproteobacteria</taxon>
        <taxon>Campylobacterales</taxon>
        <taxon>Campylobacteraceae</taxon>
        <taxon>Campylobacter</taxon>
    </lineage>
</organism>
<protein>
    <recommendedName>
        <fullName evidence="1">ATP-dependent dethiobiotin synthetase BioD</fullName>
        <ecNumber evidence="1">6.3.3.3</ecNumber>
    </recommendedName>
    <alternativeName>
        <fullName evidence="1">DTB synthetase</fullName>
        <shortName evidence="1">DTBS</shortName>
    </alternativeName>
    <alternativeName>
        <fullName evidence="1">Dethiobiotin synthase</fullName>
    </alternativeName>
</protein>
<accession>A8FK97</accession>
<name>BIOD_CAMJ8</name>
<comment type="function">
    <text evidence="1">Catalyzes a mechanistically unusual reaction, the ATP-dependent insertion of CO2 between the N7 and N8 nitrogen atoms of 7,8-diaminopelargonic acid (DAPA, also called 7,8-diammoniononanoate) to form a ureido ring.</text>
</comment>
<comment type="catalytic activity">
    <reaction evidence="1">
        <text>(7R,8S)-7,8-diammoniononanoate + CO2 + ATP = (4R,5S)-dethiobiotin + ADP + phosphate + 3 H(+)</text>
        <dbReference type="Rhea" id="RHEA:15805"/>
        <dbReference type="ChEBI" id="CHEBI:15378"/>
        <dbReference type="ChEBI" id="CHEBI:16526"/>
        <dbReference type="ChEBI" id="CHEBI:30616"/>
        <dbReference type="ChEBI" id="CHEBI:43474"/>
        <dbReference type="ChEBI" id="CHEBI:149469"/>
        <dbReference type="ChEBI" id="CHEBI:149473"/>
        <dbReference type="ChEBI" id="CHEBI:456216"/>
        <dbReference type="EC" id="6.3.3.3"/>
    </reaction>
</comment>
<comment type="cofactor">
    <cofactor evidence="1">
        <name>Mg(2+)</name>
        <dbReference type="ChEBI" id="CHEBI:18420"/>
    </cofactor>
</comment>
<comment type="pathway">
    <text evidence="1">Cofactor biosynthesis; biotin biosynthesis; biotin from 7,8-diaminononanoate: step 1/2.</text>
</comment>
<comment type="subunit">
    <text evidence="1">Homodimer.</text>
</comment>
<comment type="subcellular location">
    <subcellularLocation>
        <location evidence="1">Cytoplasm</location>
    </subcellularLocation>
</comment>
<comment type="similarity">
    <text evidence="1">Belongs to the dethiobiotin synthetase family.</text>
</comment>
<proteinExistence type="inferred from homology"/>
<keyword id="KW-0067">ATP-binding</keyword>
<keyword id="KW-0093">Biotin biosynthesis</keyword>
<keyword id="KW-0963">Cytoplasm</keyword>
<keyword id="KW-0436">Ligase</keyword>
<keyword id="KW-0460">Magnesium</keyword>
<keyword id="KW-0479">Metal-binding</keyword>
<keyword id="KW-0547">Nucleotide-binding</keyword>
<dbReference type="EC" id="6.3.3.3" evidence="1"/>
<dbReference type="EMBL" id="CP000814">
    <property type="protein sequence ID" value="ABV51884.1"/>
    <property type="molecule type" value="Genomic_DNA"/>
</dbReference>
<dbReference type="RefSeq" id="WP_002816248.1">
    <property type="nucleotide sequence ID" value="NC_009839.1"/>
</dbReference>
<dbReference type="SMR" id="A8FK97"/>
<dbReference type="KEGG" id="cju:C8J_0285"/>
<dbReference type="HOGENOM" id="CLU_072551_2_0_7"/>
<dbReference type="UniPathway" id="UPA00078">
    <property type="reaction ID" value="UER00161"/>
</dbReference>
<dbReference type="GO" id="GO:0005829">
    <property type="term" value="C:cytosol"/>
    <property type="evidence" value="ECO:0007669"/>
    <property type="project" value="TreeGrafter"/>
</dbReference>
<dbReference type="GO" id="GO:0005524">
    <property type="term" value="F:ATP binding"/>
    <property type="evidence" value="ECO:0007669"/>
    <property type="project" value="UniProtKB-UniRule"/>
</dbReference>
<dbReference type="GO" id="GO:0004141">
    <property type="term" value="F:dethiobiotin synthase activity"/>
    <property type="evidence" value="ECO:0007669"/>
    <property type="project" value="UniProtKB-UniRule"/>
</dbReference>
<dbReference type="GO" id="GO:0000287">
    <property type="term" value="F:magnesium ion binding"/>
    <property type="evidence" value="ECO:0007669"/>
    <property type="project" value="UniProtKB-UniRule"/>
</dbReference>
<dbReference type="GO" id="GO:0009102">
    <property type="term" value="P:biotin biosynthetic process"/>
    <property type="evidence" value="ECO:0007669"/>
    <property type="project" value="UniProtKB-UniRule"/>
</dbReference>
<dbReference type="CDD" id="cd03109">
    <property type="entry name" value="DTBS"/>
    <property type="match status" value="1"/>
</dbReference>
<dbReference type="Gene3D" id="3.40.50.300">
    <property type="entry name" value="P-loop containing nucleotide triphosphate hydrolases"/>
    <property type="match status" value="1"/>
</dbReference>
<dbReference type="HAMAP" id="MF_00336">
    <property type="entry name" value="BioD"/>
    <property type="match status" value="1"/>
</dbReference>
<dbReference type="InterPro" id="IPR004472">
    <property type="entry name" value="DTB_synth_BioD"/>
</dbReference>
<dbReference type="InterPro" id="IPR027417">
    <property type="entry name" value="P-loop_NTPase"/>
</dbReference>
<dbReference type="PANTHER" id="PTHR43210">
    <property type="entry name" value="DETHIOBIOTIN SYNTHETASE"/>
    <property type="match status" value="1"/>
</dbReference>
<dbReference type="PANTHER" id="PTHR43210:SF5">
    <property type="entry name" value="DETHIOBIOTIN SYNTHETASE"/>
    <property type="match status" value="1"/>
</dbReference>
<dbReference type="Pfam" id="PF13500">
    <property type="entry name" value="AAA_26"/>
    <property type="match status" value="1"/>
</dbReference>
<dbReference type="PIRSF" id="PIRSF006755">
    <property type="entry name" value="DTB_synth"/>
    <property type="match status" value="1"/>
</dbReference>
<dbReference type="SUPFAM" id="SSF52540">
    <property type="entry name" value="P-loop containing nucleoside triphosphate hydrolases"/>
    <property type="match status" value="1"/>
</dbReference>
<evidence type="ECO:0000255" key="1">
    <source>
        <dbReference type="HAMAP-Rule" id="MF_00336"/>
    </source>
</evidence>
<gene>
    <name evidence="1" type="primary">bioD</name>
    <name type="ordered locus">C8J_0285</name>
</gene>
<sequence length="201" mass="22983">MQIYVSGIHTDVGKTHFSAAFCANFNYDYFKLIQAGTPTDSEFIAKFSPKTKIFKEGIFLQTPASPHLGKIKEKLDYKALDIILPKSKNLLIELAGGLFSPMDENYTMIDFVNIFKHPTILVAKYYLGSINHILLSIEALKQRNINLLALVMMGKKDILQDDFIKNYAKIPIINLDFFDENSILNKDFKEQMQEILQLKIP</sequence>